<proteinExistence type="inferred from homology"/>
<organism>
    <name type="scientific">Bacillus cereus (strain AH187)</name>
    <dbReference type="NCBI Taxonomy" id="405534"/>
    <lineage>
        <taxon>Bacteria</taxon>
        <taxon>Bacillati</taxon>
        <taxon>Bacillota</taxon>
        <taxon>Bacilli</taxon>
        <taxon>Bacillales</taxon>
        <taxon>Bacillaceae</taxon>
        <taxon>Bacillus</taxon>
        <taxon>Bacillus cereus group</taxon>
    </lineage>
</organism>
<evidence type="ECO:0000255" key="1">
    <source>
        <dbReference type="HAMAP-Rule" id="MF_01664"/>
    </source>
</evidence>
<protein>
    <recommendedName>
        <fullName evidence="1">Heme A synthase</fullName>
        <shortName evidence="1">HAS</shortName>
        <ecNumber evidence="1">1.17.99.9</ecNumber>
    </recommendedName>
    <alternativeName>
        <fullName evidence="1">Cytochrome aa3-controlling protein</fullName>
    </alternativeName>
</protein>
<comment type="function">
    <text evidence="1">Catalyzes the conversion of heme O to heme A by two successive hydroxylations of the methyl group at C8. The first hydroxylation forms heme I, the second hydroxylation results in an unstable dihydroxymethyl group, which spontaneously dehydrates, resulting in the formyl group of heme A.</text>
</comment>
<comment type="catalytic activity">
    <reaction evidence="1">
        <text>Fe(II)-heme o + 2 A + H2O = Fe(II)-heme a + 2 AH2</text>
        <dbReference type="Rhea" id="RHEA:63388"/>
        <dbReference type="ChEBI" id="CHEBI:13193"/>
        <dbReference type="ChEBI" id="CHEBI:15377"/>
        <dbReference type="ChEBI" id="CHEBI:17499"/>
        <dbReference type="ChEBI" id="CHEBI:60530"/>
        <dbReference type="ChEBI" id="CHEBI:61715"/>
        <dbReference type="EC" id="1.17.99.9"/>
    </reaction>
    <physiologicalReaction direction="left-to-right" evidence="1">
        <dbReference type="Rhea" id="RHEA:63389"/>
    </physiologicalReaction>
</comment>
<comment type="cofactor">
    <cofactor evidence="1">
        <name>heme b</name>
        <dbReference type="ChEBI" id="CHEBI:60344"/>
    </cofactor>
</comment>
<comment type="pathway">
    <text evidence="1">Porphyrin-containing compound metabolism; heme A biosynthesis; heme A from heme O: step 1/1.</text>
</comment>
<comment type="subunit">
    <text evidence="1">Interacts with CtaB.</text>
</comment>
<comment type="subcellular location">
    <subcellularLocation>
        <location evidence="1">Cell membrane</location>
        <topology evidence="1">Multi-pass membrane protein</topology>
    </subcellularLocation>
</comment>
<comment type="domain">
    <text evidence="1">The N-half (TM1-TM4) and C-half (TM5-TM8) domains are connected by an intracellular loop. Each domain is formed from four-helix bundles and they align in a pseudo twofold symmetry manner. The N-half domain is the substrate-heme O binding domain and the C-half domain is the cofactor heme B binding domain.</text>
</comment>
<comment type="domain">
    <text evidence="1">The cysteines of disulfide bond Cys-35 and Cys-42 may be involved in transfer of reducing equivalents from quinol in the membrane to the active site of the enzyme.</text>
</comment>
<comment type="similarity">
    <text evidence="1">Belongs to the COX15/CtaA family. Type 1 subfamily.</text>
</comment>
<dbReference type="EC" id="1.17.99.9" evidence="1"/>
<dbReference type="EMBL" id="CP001177">
    <property type="protein sequence ID" value="ACJ79577.1"/>
    <property type="molecule type" value="Genomic_DNA"/>
</dbReference>
<dbReference type="SMR" id="B7HMD0"/>
<dbReference type="KEGG" id="bcr:BCAH187_A4064"/>
<dbReference type="HOGENOM" id="CLU_041525_3_1_9"/>
<dbReference type="UniPathway" id="UPA00269">
    <property type="reaction ID" value="UER00713"/>
</dbReference>
<dbReference type="Proteomes" id="UP000002214">
    <property type="component" value="Chromosome"/>
</dbReference>
<dbReference type="GO" id="GO:0005886">
    <property type="term" value="C:plasma membrane"/>
    <property type="evidence" value="ECO:0007669"/>
    <property type="project" value="UniProtKB-SubCell"/>
</dbReference>
<dbReference type="GO" id="GO:0046872">
    <property type="term" value="F:metal ion binding"/>
    <property type="evidence" value="ECO:0007669"/>
    <property type="project" value="UniProtKB-KW"/>
</dbReference>
<dbReference type="GO" id="GO:0016653">
    <property type="term" value="F:oxidoreductase activity, acting on NAD(P)H, heme protein as acceptor"/>
    <property type="evidence" value="ECO:0007669"/>
    <property type="project" value="InterPro"/>
</dbReference>
<dbReference type="GO" id="GO:0006784">
    <property type="term" value="P:heme A biosynthetic process"/>
    <property type="evidence" value="ECO:0007669"/>
    <property type="project" value="UniProtKB-UniRule"/>
</dbReference>
<dbReference type="HAMAP" id="MF_01664">
    <property type="entry name" value="HemeA_synth_type1"/>
    <property type="match status" value="1"/>
</dbReference>
<dbReference type="InterPro" id="IPR003780">
    <property type="entry name" value="COX15/CtaA_fam"/>
</dbReference>
<dbReference type="InterPro" id="IPR050450">
    <property type="entry name" value="COX15/CtaA_HemeA_synthase"/>
</dbReference>
<dbReference type="InterPro" id="IPR023755">
    <property type="entry name" value="HemeA_Synthase_type1"/>
</dbReference>
<dbReference type="PANTHER" id="PTHR35457">
    <property type="entry name" value="HEME A SYNTHASE"/>
    <property type="match status" value="1"/>
</dbReference>
<dbReference type="PANTHER" id="PTHR35457:SF1">
    <property type="entry name" value="HEME A SYNTHASE"/>
    <property type="match status" value="1"/>
</dbReference>
<dbReference type="Pfam" id="PF02628">
    <property type="entry name" value="COX15-CtaA"/>
    <property type="match status" value="1"/>
</dbReference>
<accession>B7HMD0</accession>
<feature type="chain" id="PRO_1000187240" description="Heme A synthase">
    <location>
        <begin position="1"/>
        <end position="311"/>
    </location>
</feature>
<feature type="topological domain" description="Cytoplasmic" evidence="1">
    <location>
        <begin position="1"/>
        <end position="6"/>
    </location>
</feature>
<feature type="transmembrane region" description="Helical" evidence="1">
    <location>
        <begin position="7"/>
        <end position="27"/>
    </location>
</feature>
<feature type="topological domain" description="Extracellular" evidence="1">
    <location>
        <begin position="28"/>
        <end position="62"/>
    </location>
</feature>
<feature type="transmembrane region" description="Helical" evidence="1">
    <location>
        <begin position="63"/>
        <end position="83"/>
    </location>
</feature>
<feature type="topological domain" description="Cytoplasmic" evidence="1">
    <location>
        <begin position="84"/>
        <end position="91"/>
    </location>
</feature>
<feature type="transmembrane region" description="Helical" evidence="1">
    <location>
        <begin position="92"/>
        <end position="112"/>
    </location>
</feature>
<feature type="topological domain" description="Extracellular" evidence="1">
    <location>
        <begin position="113"/>
        <end position="121"/>
    </location>
</feature>
<feature type="transmembrane region" description="Helical" evidence="1">
    <location>
        <begin position="122"/>
        <end position="142"/>
    </location>
</feature>
<feature type="topological domain" description="Cytoplasmic" evidence="1">
    <location>
        <begin position="143"/>
        <end position="159"/>
    </location>
</feature>
<feature type="transmembrane region" description="Helical" evidence="1">
    <location>
        <begin position="160"/>
        <end position="180"/>
    </location>
</feature>
<feature type="topological domain" description="Extracellular" evidence="1">
    <location>
        <begin position="181"/>
        <end position="211"/>
    </location>
</feature>
<feature type="transmembrane region" description="Helical" evidence="1">
    <location>
        <begin position="212"/>
        <end position="232"/>
    </location>
</feature>
<feature type="topological domain" description="Cytoplasmic" evidence="1">
    <location>
        <begin position="233"/>
        <end position="243"/>
    </location>
</feature>
<feature type="transmembrane region" description="Helical" evidence="1">
    <location>
        <begin position="244"/>
        <end position="264"/>
    </location>
</feature>
<feature type="topological domain" description="Extracellular" evidence="1">
    <location>
        <begin position="265"/>
        <end position="271"/>
    </location>
</feature>
<feature type="transmembrane region" description="Helical" evidence="1">
    <location>
        <begin position="272"/>
        <end position="292"/>
    </location>
</feature>
<feature type="topological domain" description="Cytoplasmic" evidence="1">
    <location>
        <begin position="293"/>
        <end position="311"/>
    </location>
</feature>
<feature type="active site" evidence="1">
    <location>
        <position position="58"/>
    </location>
</feature>
<feature type="binding site" description="axial binding residue" evidence="1">
    <location>
        <position position="61"/>
    </location>
    <ligand>
        <name>heme o</name>
        <dbReference type="ChEBI" id="CHEBI:24480"/>
    </ligand>
    <ligandPart>
        <name>Fe</name>
        <dbReference type="ChEBI" id="CHEBI:18248"/>
    </ligandPart>
</feature>
<feature type="binding site" description="axial binding residue" evidence="1">
    <location>
        <position position="123"/>
    </location>
    <ligand>
        <name>heme o</name>
        <dbReference type="ChEBI" id="CHEBI:24480"/>
    </ligand>
    <ligandPart>
        <name>Fe</name>
        <dbReference type="ChEBI" id="CHEBI:18248"/>
    </ligandPart>
</feature>
<feature type="binding site" description="axial binding residue" evidence="1">
    <location>
        <position position="213"/>
    </location>
    <ligand>
        <name>heme b</name>
        <dbReference type="ChEBI" id="CHEBI:60344"/>
    </ligand>
    <ligandPart>
        <name>Fe</name>
        <dbReference type="ChEBI" id="CHEBI:18248"/>
    </ligandPart>
</feature>
<feature type="binding site" description="axial binding residue" evidence="1">
    <location>
        <position position="275"/>
    </location>
    <ligand>
        <name>heme b</name>
        <dbReference type="ChEBI" id="CHEBI:60344"/>
    </ligand>
    <ligandPart>
        <name>Fe</name>
        <dbReference type="ChEBI" id="CHEBI:18248"/>
    </ligandPart>
</feature>
<feature type="disulfide bond" description="Essential for catalytic activity" evidence="1">
    <location>
        <begin position="35"/>
        <end position="42"/>
    </location>
</feature>
<feature type="disulfide bond" evidence="1">
    <location>
        <begin position="189"/>
        <end position="195"/>
    </location>
</feature>
<sequence>MQRFIKWLAVITSLDLLIVLLGGALVTKTGSGQGCGKSWPLCNGEFVPSNLSMETIIELSHRLTSGSAGILVTLLCILSWKYYKHVRETKTLAILSFVFLVAQALMGAAAVVWGQMPAVLAIHFGISLISFASVILLTCLIFEIDQKFDARSLIMDKKMKFHIYGVTIYSYIVVYTGALVRHERASLACPDFPLCSKNRPMPTQLHEWVQMGHRVAAMLIFAWILYAMILAIRHYKQQPVVYWGWIISFILVTLQAIVGILVVFTNASLSMALLHSLFISCLFAVLCYLVMLGTRSKVNAKEAASISKQTK</sequence>
<gene>
    <name evidence="1" type="primary">ctaA</name>
    <name type="ordered locus">BCAH187_A4064</name>
</gene>
<keyword id="KW-1003">Cell membrane</keyword>
<keyword id="KW-1015">Disulfide bond</keyword>
<keyword id="KW-0350">Heme biosynthesis</keyword>
<keyword id="KW-0408">Iron</keyword>
<keyword id="KW-0472">Membrane</keyword>
<keyword id="KW-0479">Metal-binding</keyword>
<keyword id="KW-0560">Oxidoreductase</keyword>
<keyword id="KW-0812">Transmembrane</keyword>
<keyword id="KW-1133">Transmembrane helix</keyword>
<reference key="1">
    <citation type="submission" date="2008-10" db="EMBL/GenBank/DDBJ databases">
        <title>Genome sequence of Bacillus cereus AH187.</title>
        <authorList>
            <person name="Dodson R.J."/>
            <person name="Durkin A.S."/>
            <person name="Rosovitz M.J."/>
            <person name="Rasko D.A."/>
            <person name="Kolsto A.B."/>
            <person name="Okstad O.A."/>
            <person name="Ravel J."/>
            <person name="Sutton G."/>
        </authorList>
    </citation>
    <scope>NUCLEOTIDE SEQUENCE [LARGE SCALE GENOMIC DNA]</scope>
    <source>
        <strain>AH187</strain>
    </source>
</reference>
<name>CTAA_BACC7</name>